<organism>
    <name type="scientific">Saccharomyces cerevisiae (strain ATCC 204508 / S288c)</name>
    <name type="common">Baker's yeast</name>
    <dbReference type="NCBI Taxonomy" id="559292"/>
    <lineage>
        <taxon>Eukaryota</taxon>
        <taxon>Fungi</taxon>
        <taxon>Dikarya</taxon>
        <taxon>Ascomycota</taxon>
        <taxon>Saccharomycotina</taxon>
        <taxon>Saccharomycetes</taxon>
        <taxon>Saccharomycetales</taxon>
        <taxon>Saccharomycetaceae</taxon>
        <taxon>Saccharomyces</taxon>
    </lineage>
</organism>
<proteinExistence type="evidence at protein level"/>
<keyword id="KW-0963">Cytoplasm</keyword>
<keyword id="KW-0206">Cytoskeleton</keyword>
<keyword id="KW-0597">Phosphoprotein</keyword>
<keyword id="KW-1185">Reference proteome</keyword>
<accession>P40518</accession>
<accession>D6VVM2</accession>
<dbReference type="EMBL" id="Z38060">
    <property type="protein sequence ID" value="CAA86161.1"/>
    <property type="molecule type" value="Genomic_DNA"/>
</dbReference>
<dbReference type="EMBL" id="AY557850">
    <property type="protein sequence ID" value="AAS56176.1"/>
    <property type="molecule type" value="Genomic_DNA"/>
</dbReference>
<dbReference type="EMBL" id="BK006942">
    <property type="protein sequence ID" value="DAA08488.1"/>
    <property type="molecule type" value="Genomic_DNA"/>
</dbReference>
<dbReference type="PIR" id="S48417">
    <property type="entry name" value="S48417"/>
</dbReference>
<dbReference type="RefSeq" id="NP_012202.1">
    <property type="nucleotide sequence ID" value="NM_001179412.1"/>
</dbReference>
<dbReference type="SMR" id="P40518"/>
<dbReference type="BioGRID" id="34930">
    <property type="interactions" value="439"/>
</dbReference>
<dbReference type="ComplexPortal" id="CPX-607">
    <property type="entry name" value="Actin-related protein 2/3 complex"/>
</dbReference>
<dbReference type="DIP" id="DIP-2101N"/>
<dbReference type="FunCoup" id="P40518">
    <property type="interactions" value="632"/>
</dbReference>
<dbReference type="IntAct" id="P40518">
    <property type="interactions" value="29"/>
</dbReference>
<dbReference type="MINT" id="P40518"/>
<dbReference type="STRING" id="4932.YIL062C"/>
<dbReference type="iPTMnet" id="P40518"/>
<dbReference type="PaxDb" id="4932-YIL062C"/>
<dbReference type="PeptideAtlas" id="P40518"/>
<dbReference type="TopDownProteomics" id="P40518"/>
<dbReference type="EnsemblFungi" id="YIL062C_mRNA">
    <property type="protein sequence ID" value="YIL062C"/>
    <property type="gene ID" value="YIL062C"/>
</dbReference>
<dbReference type="GeneID" id="854748"/>
<dbReference type="KEGG" id="sce:YIL062C"/>
<dbReference type="AGR" id="SGD:S000001324"/>
<dbReference type="SGD" id="S000001324">
    <property type="gene designation" value="ARC15"/>
</dbReference>
<dbReference type="VEuPathDB" id="FungiDB:YIL062C"/>
<dbReference type="eggNOG" id="KOG3380">
    <property type="taxonomic scope" value="Eukaryota"/>
</dbReference>
<dbReference type="GeneTree" id="ENSGT00940000169405"/>
<dbReference type="HOGENOM" id="CLU_101888_2_0_1"/>
<dbReference type="InParanoid" id="P40518"/>
<dbReference type="OMA" id="GMGCIMR"/>
<dbReference type="OrthoDB" id="195498at2759"/>
<dbReference type="BioCyc" id="YEAST:G3O-31330-MONOMER"/>
<dbReference type="Reactome" id="R-SCE-2029482">
    <property type="pathway name" value="Regulation of actin dynamics for phagocytic cup formation"/>
</dbReference>
<dbReference type="Reactome" id="R-SCE-5663213">
    <property type="pathway name" value="RHO GTPases Activate WASPs and WAVEs"/>
</dbReference>
<dbReference type="Reactome" id="R-SCE-6798695">
    <property type="pathway name" value="Neutrophil degranulation"/>
</dbReference>
<dbReference type="BioGRID-ORCS" id="854748">
    <property type="hits" value="8 hits in 10 CRISPR screens"/>
</dbReference>
<dbReference type="PRO" id="PR:P40518"/>
<dbReference type="Proteomes" id="UP000002311">
    <property type="component" value="Chromosome IX"/>
</dbReference>
<dbReference type="RNAct" id="P40518">
    <property type="molecule type" value="protein"/>
</dbReference>
<dbReference type="GO" id="GO:0030479">
    <property type="term" value="C:actin cortical patch"/>
    <property type="evidence" value="ECO:0007669"/>
    <property type="project" value="UniProtKB-SubCell"/>
</dbReference>
<dbReference type="GO" id="GO:0015629">
    <property type="term" value="C:actin cytoskeleton"/>
    <property type="evidence" value="ECO:0000303"/>
    <property type="project" value="ComplexPortal"/>
</dbReference>
<dbReference type="GO" id="GO:0005885">
    <property type="term" value="C:Arp2/3 protein complex"/>
    <property type="evidence" value="ECO:0000314"/>
    <property type="project" value="SGD"/>
</dbReference>
<dbReference type="GO" id="GO:0005737">
    <property type="term" value="C:cytoplasm"/>
    <property type="evidence" value="ECO:0000318"/>
    <property type="project" value="GO_Central"/>
</dbReference>
<dbReference type="GO" id="GO:0051015">
    <property type="term" value="F:actin filament binding"/>
    <property type="evidence" value="ECO:0000318"/>
    <property type="project" value="GO_Central"/>
</dbReference>
<dbReference type="GO" id="GO:0003729">
    <property type="term" value="F:mRNA binding"/>
    <property type="evidence" value="ECO:0000314"/>
    <property type="project" value="SGD"/>
</dbReference>
<dbReference type="GO" id="GO:0030674">
    <property type="term" value="F:protein-macromolecule adaptor activity"/>
    <property type="evidence" value="ECO:0000315"/>
    <property type="project" value="SGD"/>
</dbReference>
<dbReference type="GO" id="GO:0044396">
    <property type="term" value="P:actin cortical patch organization"/>
    <property type="evidence" value="ECO:0000315"/>
    <property type="project" value="SGD"/>
</dbReference>
<dbReference type="GO" id="GO:0045010">
    <property type="term" value="P:actin nucleation"/>
    <property type="evidence" value="ECO:0000303"/>
    <property type="project" value="ComplexPortal"/>
</dbReference>
<dbReference type="GO" id="GO:0034314">
    <property type="term" value="P:Arp2/3 complex-mediated actin nucleation"/>
    <property type="evidence" value="ECO:0000318"/>
    <property type="project" value="GO_Central"/>
</dbReference>
<dbReference type="GO" id="GO:0000001">
    <property type="term" value="P:mitochondrion inheritance"/>
    <property type="evidence" value="ECO:0000315"/>
    <property type="project" value="SGD"/>
</dbReference>
<dbReference type="GO" id="GO:0030833">
    <property type="term" value="P:regulation of actin filament polymerization"/>
    <property type="evidence" value="ECO:0007669"/>
    <property type="project" value="InterPro"/>
</dbReference>
<dbReference type="FunFam" id="1.25.40.190:FF:000003">
    <property type="entry name" value="Actin-related protein 2/3 complex subunit 5"/>
    <property type="match status" value="1"/>
</dbReference>
<dbReference type="Gene3D" id="1.25.40.190">
    <property type="entry name" value="Actin-related protein 2/3 complex subunit 5"/>
    <property type="match status" value="1"/>
</dbReference>
<dbReference type="InterPro" id="IPR006789">
    <property type="entry name" value="ARPC5"/>
</dbReference>
<dbReference type="InterPro" id="IPR036743">
    <property type="entry name" value="ARPC5_sf"/>
</dbReference>
<dbReference type="PANTHER" id="PTHR12644">
    <property type="entry name" value="ARP2/3 COMPLEX 16 KD SUBUNIT P16-ARC"/>
    <property type="match status" value="1"/>
</dbReference>
<dbReference type="Pfam" id="PF04699">
    <property type="entry name" value="P16-Arc"/>
    <property type="match status" value="1"/>
</dbReference>
<dbReference type="PIRSF" id="PIRSF039096">
    <property type="entry name" value="p16-ARC"/>
    <property type="match status" value="1"/>
</dbReference>
<dbReference type="SUPFAM" id="SSF69103">
    <property type="entry name" value="Arp2/3 complex 16 kDa subunit ARPC5"/>
    <property type="match status" value="1"/>
</dbReference>
<protein>
    <recommendedName>
        <fullName>Actin-related protein 2/3 complex subunit 5</fullName>
    </recommendedName>
    <alternativeName>
        <fullName>Arp2/3 complex 16 kDa subunit</fullName>
        <shortName>p16-ARC</shortName>
    </alternativeName>
</protein>
<sequence length="154" mass="17134">MEADWRRIDIDAFDPESGRLTAADLVPPYETTVTLQELQPRMNQLRSLATSGDSLGAVQLLTTDPPYSADAPTKEQYFKSVLEALTQVRQADIGNVIKNLSDSQRDVLVKYLYKGMSVPQGQKQGGVLLAWLERITQVSGVTPIVHYISDRRTV</sequence>
<reference key="1">
    <citation type="journal article" date="1997" name="Nature">
        <title>The nucleotide sequence of Saccharomyces cerevisiae chromosome IX.</title>
        <authorList>
            <person name="Churcher C.M."/>
            <person name="Bowman S."/>
            <person name="Badcock K."/>
            <person name="Bankier A.T."/>
            <person name="Brown D."/>
            <person name="Chillingworth T."/>
            <person name="Connor R."/>
            <person name="Devlin K."/>
            <person name="Gentles S."/>
            <person name="Hamlin N."/>
            <person name="Harris D.E."/>
            <person name="Horsnell T."/>
            <person name="Hunt S."/>
            <person name="Jagels K."/>
            <person name="Jones M."/>
            <person name="Lye G."/>
            <person name="Moule S."/>
            <person name="Odell C."/>
            <person name="Pearson D."/>
            <person name="Rajandream M.A."/>
            <person name="Rice P."/>
            <person name="Rowley N."/>
            <person name="Skelton J."/>
            <person name="Smith V."/>
            <person name="Walsh S.V."/>
            <person name="Whitehead S."/>
            <person name="Barrell B.G."/>
        </authorList>
    </citation>
    <scope>NUCLEOTIDE SEQUENCE [LARGE SCALE GENOMIC DNA]</scope>
    <source>
        <strain>ATCC 204508 / S288c</strain>
    </source>
</reference>
<reference key="2">
    <citation type="journal article" date="2014" name="G3 (Bethesda)">
        <title>The reference genome sequence of Saccharomyces cerevisiae: Then and now.</title>
        <authorList>
            <person name="Engel S.R."/>
            <person name="Dietrich F.S."/>
            <person name="Fisk D.G."/>
            <person name="Binkley G."/>
            <person name="Balakrishnan R."/>
            <person name="Costanzo M.C."/>
            <person name="Dwight S.S."/>
            <person name="Hitz B.C."/>
            <person name="Karra K."/>
            <person name="Nash R.S."/>
            <person name="Weng S."/>
            <person name="Wong E.D."/>
            <person name="Lloyd P."/>
            <person name="Skrzypek M.S."/>
            <person name="Miyasato S.R."/>
            <person name="Simison M."/>
            <person name="Cherry J.M."/>
        </authorList>
    </citation>
    <scope>GENOME REANNOTATION</scope>
    <source>
        <strain>ATCC 204508 / S288c</strain>
    </source>
</reference>
<reference key="3">
    <citation type="journal article" date="2007" name="Genome Res.">
        <title>Approaching a complete repository of sequence-verified protein-encoding clones for Saccharomyces cerevisiae.</title>
        <authorList>
            <person name="Hu Y."/>
            <person name="Rolfs A."/>
            <person name="Bhullar B."/>
            <person name="Murthy T.V.S."/>
            <person name="Zhu C."/>
            <person name="Berger M.F."/>
            <person name="Camargo A.A."/>
            <person name="Kelley F."/>
            <person name="McCarron S."/>
            <person name="Jepson D."/>
            <person name="Richardson A."/>
            <person name="Raphael J."/>
            <person name="Moreira D."/>
            <person name="Taycher E."/>
            <person name="Zuo D."/>
            <person name="Mohr S."/>
            <person name="Kane M.F."/>
            <person name="Williamson J."/>
            <person name="Simpson A.J.G."/>
            <person name="Bulyk M.L."/>
            <person name="Harlow E."/>
            <person name="Marsischky G."/>
            <person name="Kolodner R.D."/>
            <person name="LaBaer J."/>
        </authorList>
    </citation>
    <scope>NUCLEOTIDE SEQUENCE [GENOMIC DNA]</scope>
    <source>
        <strain>ATCC 204508 / S288c</strain>
    </source>
</reference>
<reference key="4">
    <citation type="journal article" date="1997" name="Curr. Biol.">
        <title>The complex containing actin-related proteins Arp2 and Arp3 is required for the motility and integrity of yeast actin patches.</title>
        <authorList>
            <person name="Winter D."/>
            <person name="Podtelejnikov A.V."/>
            <person name="Mann M."/>
            <person name="Li R."/>
        </authorList>
    </citation>
    <scope>IDENTIFICATION IN THE ARP2/3 COMPLEX</scope>
</reference>
<reference key="5">
    <citation type="journal article" date="1997" name="Curr. Biol.">
        <authorList>
            <person name="Winter D."/>
            <person name="Podtelejnikov A.V."/>
            <person name="Mann M."/>
            <person name="Li R."/>
        </authorList>
    </citation>
    <scope>ERRATUM OF PUBMED:9210376</scope>
</reference>
<reference key="6">
    <citation type="journal article" date="2001" name="Proc. Natl. Acad. Sci. U.S.A.">
        <title>Arp2/3 complex and actin dynamics are required for actin-based mitochondrial motility in yeast.</title>
        <authorList>
            <person name="Boldogh I.R."/>
            <person name="Yang H.C."/>
            <person name="Nowakowski W.D."/>
            <person name="Karmon S.L."/>
            <person name="Hays L.G."/>
            <person name="Yates J.R. III"/>
            <person name="Pon L.A."/>
        </authorList>
    </citation>
    <scope>SUBCELLULAR LOCATION</scope>
</reference>
<reference key="7">
    <citation type="journal article" date="2003" name="Nature">
        <title>Global analysis of protein expression in yeast.</title>
        <authorList>
            <person name="Ghaemmaghami S."/>
            <person name="Huh W.-K."/>
            <person name="Bower K."/>
            <person name="Howson R.W."/>
            <person name="Belle A."/>
            <person name="Dephoure N."/>
            <person name="O'Shea E.K."/>
            <person name="Weissman J.S."/>
        </authorList>
    </citation>
    <scope>LEVEL OF PROTEIN EXPRESSION [LARGE SCALE ANALYSIS]</scope>
</reference>
<reference key="8">
    <citation type="journal article" date="2008" name="Mol. Cell. Proteomics">
        <title>A multidimensional chromatography technology for in-depth phosphoproteome analysis.</title>
        <authorList>
            <person name="Albuquerque C.P."/>
            <person name="Smolka M.B."/>
            <person name="Payne S.H."/>
            <person name="Bafna V."/>
            <person name="Eng J."/>
            <person name="Zhou H."/>
        </authorList>
    </citation>
    <scope>PHOSPHORYLATION [LARGE SCALE ANALYSIS] AT THR-142</scope>
    <scope>IDENTIFICATION BY MASS SPECTROMETRY [LARGE SCALE ANALYSIS]</scope>
</reference>
<gene>
    <name type="primary">ARC15</name>
    <name type="ordered locus">YIL062C</name>
</gene>
<evidence type="ECO:0000250" key="1"/>
<evidence type="ECO:0000269" key="2">
    <source>
    </source>
</evidence>
<evidence type="ECO:0000269" key="3">
    <source>
    </source>
</evidence>
<evidence type="ECO:0000269" key="4">
    <source>
    </source>
</evidence>
<evidence type="ECO:0000305" key="5"/>
<evidence type="ECO:0007744" key="6">
    <source>
    </source>
</evidence>
<name>ARPC5_YEAST</name>
<comment type="function">
    <text evidence="1">Functions as a component of the Arp2/3 complex which is involved in regulation of actin polymerization and together with an activating nucleation-promoting factor (NPF) mediates the formation of branched actin networks.</text>
</comment>
<comment type="subunit">
    <text evidence="4">Component of the Arp2/3 complex composed of ARP2, ARP3, ARC40/p41-ARC, ARC35/p34-ARC, ARC18/p21-ARC, ARC19/p20-ARC and ARC16/p16-ARC.</text>
</comment>
<comment type="subcellular location">
    <subcellularLocation>
        <location evidence="2">Cytoplasm</location>
        <location evidence="2">Cytoskeleton</location>
        <location evidence="2">Actin patch</location>
    </subcellularLocation>
</comment>
<comment type="miscellaneous">
    <text evidence="3">Present with 3060 molecules/cell in log phase SD medium.</text>
</comment>
<comment type="similarity">
    <text evidence="5">Belongs to the ARPC5 family.</text>
</comment>
<feature type="chain" id="PRO_0000124059" description="Actin-related protein 2/3 complex subunit 5">
    <location>
        <begin position="1"/>
        <end position="154"/>
    </location>
</feature>
<feature type="modified residue" description="Phosphothreonine" evidence="6">
    <location>
        <position position="142"/>
    </location>
</feature>